<sequence>MTMSSYLINSNYIEPSFPPCDEYQQSGYIPNHGDYYERPKDTGFPHHSEPSYPRSNYTESGYDYGNVPTTGLEDFNDGHHAQPQPVPQSHGPRLSAAPDGGAGAIASKDCSIASEVYPGVAKGKEPVVYPWMKKVHATNITAGYNGGVPKRSRTAYTRQQALELEKEFHFNRYLTRRRRVEIAHTMCLSERQVKIWFQNRRMKWKKEHKLPNTKIRSSSSASSSASGAQQHQQQQQQLQIKSGQQLVPTPSAVSL</sequence>
<protein>
    <recommendedName>
        <fullName>Homeobox protein Hox-A4a</fullName>
    </recommendedName>
</protein>
<feature type="chain" id="PRO_0000265966" description="Homeobox protein Hox-A4a">
    <location>
        <begin position="1"/>
        <end position="255"/>
    </location>
</feature>
<feature type="DNA-binding region" description="Homeobox" evidence="2">
    <location>
        <begin position="149"/>
        <end position="208"/>
    </location>
</feature>
<feature type="region of interest" description="Disordered" evidence="3">
    <location>
        <begin position="28"/>
        <end position="102"/>
    </location>
</feature>
<feature type="region of interest" description="Disordered" evidence="3">
    <location>
        <begin position="207"/>
        <end position="255"/>
    </location>
</feature>
<feature type="short sequence motif" description="Antp-type hexapeptide">
    <location>
        <begin position="128"/>
        <end position="133"/>
    </location>
</feature>
<feature type="compositionally biased region" description="Basic and acidic residues" evidence="3">
    <location>
        <begin position="34"/>
        <end position="49"/>
    </location>
</feature>
<feature type="compositionally biased region" description="Low complexity" evidence="3">
    <location>
        <begin position="217"/>
        <end position="245"/>
    </location>
</feature>
<feature type="compositionally biased region" description="Polar residues" evidence="3">
    <location>
        <begin position="246"/>
        <end position="255"/>
    </location>
</feature>
<name>HXA4A_TAKRU</name>
<keyword id="KW-0217">Developmental protein</keyword>
<keyword id="KW-0238">DNA-binding</keyword>
<keyword id="KW-0371">Homeobox</keyword>
<keyword id="KW-0539">Nucleus</keyword>
<keyword id="KW-1185">Reference proteome</keyword>
<keyword id="KW-0804">Transcription</keyword>
<keyword id="KW-0805">Transcription regulation</keyword>
<gene>
    <name type="primary">hoxa4a</name>
</gene>
<comment type="function">
    <text evidence="1">Sequence-specific transcription factor which is part of a developmental regulatory system that provides cells with specific positional identities on the anterior-posterior axis.</text>
</comment>
<comment type="subcellular location">
    <subcellularLocation>
        <location evidence="2">Nucleus</location>
    </subcellularLocation>
</comment>
<comment type="similarity">
    <text evidence="4">Belongs to the Antp homeobox family. Deformed subfamily.</text>
</comment>
<evidence type="ECO:0000250" key="1"/>
<evidence type="ECO:0000255" key="2">
    <source>
        <dbReference type="PROSITE-ProRule" id="PRU00108"/>
    </source>
</evidence>
<evidence type="ECO:0000256" key="3">
    <source>
        <dbReference type="SAM" id="MobiDB-lite"/>
    </source>
</evidence>
<evidence type="ECO:0000305" key="4"/>
<accession>Q1KL13</accession>
<proteinExistence type="inferred from homology"/>
<dbReference type="EMBL" id="DQ481663">
    <property type="protein sequence ID" value="ABF22381.1"/>
    <property type="molecule type" value="Genomic_DNA"/>
</dbReference>
<dbReference type="SMR" id="Q1KL13"/>
<dbReference type="FunCoup" id="Q1KL13">
    <property type="interactions" value="16"/>
</dbReference>
<dbReference type="STRING" id="31033.ENSTRUP00000053686"/>
<dbReference type="Ensembl" id="ENSTRUT00000057830.2">
    <property type="protein sequence ID" value="ENSTRUP00000053686.1"/>
    <property type="gene ID" value="ENSTRUG00000023173.2"/>
</dbReference>
<dbReference type="GeneID" id="101064253"/>
<dbReference type="KEGG" id="tru:101064253"/>
<dbReference type="CTD" id="58050"/>
<dbReference type="GeneTree" id="ENSGT00940000158988"/>
<dbReference type="InParanoid" id="Q1KL13"/>
<dbReference type="OMA" id="HEEPSYP"/>
<dbReference type="OrthoDB" id="6159439at2759"/>
<dbReference type="Proteomes" id="UP000005226">
    <property type="component" value="Chromosome 12"/>
</dbReference>
<dbReference type="GO" id="GO:0005654">
    <property type="term" value="C:nucleoplasm"/>
    <property type="evidence" value="ECO:0007669"/>
    <property type="project" value="TreeGrafter"/>
</dbReference>
<dbReference type="GO" id="GO:0000981">
    <property type="term" value="F:DNA-binding transcription factor activity, RNA polymerase II-specific"/>
    <property type="evidence" value="ECO:0007669"/>
    <property type="project" value="InterPro"/>
</dbReference>
<dbReference type="GO" id="GO:0000978">
    <property type="term" value="F:RNA polymerase II cis-regulatory region sequence-specific DNA binding"/>
    <property type="evidence" value="ECO:0007669"/>
    <property type="project" value="TreeGrafter"/>
</dbReference>
<dbReference type="GO" id="GO:0009952">
    <property type="term" value="P:anterior/posterior pattern specification"/>
    <property type="evidence" value="ECO:0007669"/>
    <property type="project" value="TreeGrafter"/>
</dbReference>
<dbReference type="GO" id="GO:0048704">
    <property type="term" value="P:embryonic skeletal system morphogenesis"/>
    <property type="evidence" value="ECO:0007669"/>
    <property type="project" value="TreeGrafter"/>
</dbReference>
<dbReference type="GO" id="GO:0045944">
    <property type="term" value="P:positive regulation of transcription by RNA polymerase II"/>
    <property type="evidence" value="ECO:0007669"/>
    <property type="project" value="TreeGrafter"/>
</dbReference>
<dbReference type="CDD" id="cd00086">
    <property type="entry name" value="homeodomain"/>
    <property type="match status" value="1"/>
</dbReference>
<dbReference type="FunFam" id="1.10.10.60:FF:000029">
    <property type="entry name" value="Homeobox protein Hox-D4"/>
    <property type="match status" value="1"/>
</dbReference>
<dbReference type="Gene3D" id="1.10.10.60">
    <property type="entry name" value="Homeodomain-like"/>
    <property type="match status" value="1"/>
</dbReference>
<dbReference type="InterPro" id="IPR050609">
    <property type="entry name" value="Antp_homeobox_Deformed_sf"/>
</dbReference>
<dbReference type="InterPro" id="IPR001356">
    <property type="entry name" value="HD"/>
</dbReference>
<dbReference type="InterPro" id="IPR020479">
    <property type="entry name" value="HD_metazoa"/>
</dbReference>
<dbReference type="InterPro" id="IPR017995">
    <property type="entry name" value="Homeobox_antennapedia"/>
</dbReference>
<dbReference type="InterPro" id="IPR001827">
    <property type="entry name" value="Homeobox_Antennapedia_CS"/>
</dbReference>
<dbReference type="InterPro" id="IPR017970">
    <property type="entry name" value="Homeobox_CS"/>
</dbReference>
<dbReference type="InterPro" id="IPR009057">
    <property type="entry name" value="Homeodomain-like_sf"/>
</dbReference>
<dbReference type="PANTHER" id="PTHR45771:SF2">
    <property type="entry name" value="HOMEOBOX PROTEIN HOX-A4"/>
    <property type="match status" value="1"/>
</dbReference>
<dbReference type="PANTHER" id="PTHR45771">
    <property type="entry name" value="HOMEOTIC PROTEIN DEFORMED"/>
    <property type="match status" value="1"/>
</dbReference>
<dbReference type="Pfam" id="PF00046">
    <property type="entry name" value="Homeodomain"/>
    <property type="match status" value="1"/>
</dbReference>
<dbReference type="PRINTS" id="PR00025">
    <property type="entry name" value="ANTENNAPEDIA"/>
</dbReference>
<dbReference type="PRINTS" id="PR00024">
    <property type="entry name" value="HOMEOBOX"/>
</dbReference>
<dbReference type="SMART" id="SM00389">
    <property type="entry name" value="HOX"/>
    <property type="match status" value="1"/>
</dbReference>
<dbReference type="SUPFAM" id="SSF46689">
    <property type="entry name" value="Homeodomain-like"/>
    <property type="match status" value="1"/>
</dbReference>
<dbReference type="PROSITE" id="PS00032">
    <property type="entry name" value="ANTENNAPEDIA"/>
    <property type="match status" value="1"/>
</dbReference>
<dbReference type="PROSITE" id="PS00027">
    <property type="entry name" value="HOMEOBOX_1"/>
    <property type="match status" value="1"/>
</dbReference>
<dbReference type="PROSITE" id="PS50071">
    <property type="entry name" value="HOMEOBOX_2"/>
    <property type="match status" value="1"/>
</dbReference>
<organism>
    <name type="scientific">Takifugu rubripes</name>
    <name type="common">Japanese pufferfish</name>
    <name type="synonym">Fugu rubripes</name>
    <dbReference type="NCBI Taxonomy" id="31033"/>
    <lineage>
        <taxon>Eukaryota</taxon>
        <taxon>Metazoa</taxon>
        <taxon>Chordata</taxon>
        <taxon>Craniata</taxon>
        <taxon>Vertebrata</taxon>
        <taxon>Euteleostomi</taxon>
        <taxon>Actinopterygii</taxon>
        <taxon>Neopterygii</taxon>
        <taxon>Teleostei</taxon>
        <taxon>Neoteleostei</taxon>
        <taxon>Acanthomorphata</taxon>
        <taxon>Eupercaria</taxon>
        <taxon>Tetraodontiformes</taxon>
        <taxon>Tetradontoidea</taxon>
        <taxon>Tetraodontidae</taxon>
        <taxon>Takifugu</taxon>
    </lineage>
</organism>
<reference key="1">
    <citation type="journal article" date="2006" name="Proc. Natl. Acad. Sci. U.S.A.">
        <title>Highly conserved syntenic blocks at the vertebrate Hox loci and conserved regulatory elements within and outside Hox gene clusters.</title>
        <authorList>
            <person name="Lee A.P."/>
            <person name="Koh E.G.L."/>
            <person name="Tay A."/>
            <person name="Brenner S."/>
            <person name="Venkatesh B."/>
        </authorList>
    </citation>
    <scope>NUCLEOTIDE SEQUENCE [GENOMIC DNA]</scope>
</reference>